<sequence length="215" mass="23792">MATDYQDITIAFAGICQAATLVQQFANKGVADRAVFSSTIKSLLVTQPQSTLAVYDGNIAHLTMGLATVQAQMGGGNGKLDTEIGRYWINILALSQKLNKDPVAKSQLIQRLKQIERQLSLYDNDIMADQIIANLAAIYSEIISPLGSKIQVLGLQDYLVRPDIQHKVRASLLAGVRAGILWQQVGGSRWQFLFSRKKIFNQAKLFYKDFELSSD</sequence>
<feature type="chain" id="PRO_0000071579" description="High frequency lysogenization protein HflD homolog">
    <location>
        <begin position="1"/>
        <end position="215"/>
    </location>
</feature>
<gene>
    <name evidence="1" type="primary">hflD</name>
    <name type="ordered locus">HD_1650</name>
</gene>
<keyword id="KW-0997">Cell inner membrane</keyword>
<keyword id="KW-1003">Cell membrane</keyword>
<keyword id="KW-0963">Cytoplasm</keyword>
<keyword id="KW-0472">Membrane</keyword>
<keyword id="KW-1185">Reference proteome</keyword>
<proteinExistence type="inferred from homology"/>
<reference key="1">
    <citation type="submission" date="2003-06" db="EMBL/GenBank/DDBJ databases">
        <title>The complete genome sequence of Haemophilus ducreyi.</title>
        <authorList>
            <person name="Munson R.S. Jr."/>
            <person name="Ray W.C."/>
            <person name="Mahairas G."/>
            <person name="Sabo P."/>
            <person name="Mungur R."/>
            <person name="Johnson L."/>
            <person name="Nguyen D."/>
            <person name="Wang J."/>
            <person name="Forst C."/>
            <person name="Hood L."/>
        </authorList>
    </citation>
    <scope>NUCLEOTIDE SEQUENCE [LARGE SCALE GENOMIC DNA]</scope>
    <source>
        <strain>35000HP / ATCC 700724</strain>
    </source>
</reference>
<accession>Q7VL35</accession>
<dbReference type="EMBL" id="AE017143">
    <property type="protein sequence ID" value="AAP96424.1"/>
    <property type="molecule type" value="Genomic_DNA"/>
</dbReference>
<dbReference type="RefSeq" id="WP_010945456.1">
    <property type="nucleotide sequence ID" value="NC_002940.2"/>
</dbReference>
<dbReference type="SMR" id="Q7VL35"/>
<dbReference type="STRING" id="233412.HD_1650"/>
<dbReference type="KEGG" id="hdu:HD_1650"/>
<dbReference type="eggNOG" id="COG2915">
    <property type="taxonomic scope" value="Bacteria"/>
</dbReference>
<dbReference type="HOGENOM" id="CLU_098920_0_0_6"/>
<dbReference type="OrthoDB" id="9788031at2"/>
<dbReference type="Proteomes" id="UP000001022">
    <property type="component" value="Chromosome"/>
</dbReference>
<dbReference type="GO" id="GO:0005737">
    <property type="term" value="C:cytoplasm"/>
    <property type="evidence" value="ECO:0007669"/>
    <property type="project" value="UniProtKB-SubCell"/>
</dbReference>
<dbReference type="GO" id="GO:0005886">
    <property type="term" value="C:plasma membrane"/>
    <property type="evidence" value="ECO:0007669"/>
    <property type="project" value="UniProtKB-SubCell"/>
</dbReference>
<dbReference type="Gene3D" id="1.10.3890.10">
    <property type="entry name" value="HflD-like"/>
    <property type="match status" value="1"/>
</dbReference>
<dbReference type="HAMAP" id="MF_00695">
    <property type="entry name" value="HflD_protein"/>
    <property type="match status" value="1"/>
</dbReference>
<dbReference type="InterPro" id="IPR007451">
    <property type="entry name" value="HflD"/>
</dbReference>
<dbReference type="InterPro" id="IPR035932">
    <property type="entry name" value="HflD-like_sf"/>
</dbReference>
<dbReference type="NCBIfam" id="NF001246">
    <property type="entry name" value="PRK00218.1-2"/>
    <property type="match status" value="1"/>
</dbReference>
<dbReference type="NCBIfam" id="NF001248">
    <property type="entry name" value="PRK00218.1-4"/>
    <property type="match status" value="1"/>
</dbReference>
<dbReference type="PANTHER" id="PTHR38100">
    <property type="entry name" value="HIGH FREQUENCY LYSOGENIZATION PROTEIN HFLD"/>
    <property type="match status" value="1"/>
</dbReference>
<dbReference type="PANTHER" id="PTHR38100:SF1">
    <property type="entry name" value="HIGH FREQUENCY LYSOGENIZATION PROTEIN HFLD"/>
    <property type="match status" value="1"/>
</dbReference>
<dbReference type="Pfam" id="PF04356">
    <property type="entry name" value="DUF489"/>
    <property type="match status" value="1"/>
</dbReference>
<dbReference type="SUPFAM" id="SSF101322">
    <property type="entry name" value="YcfC-like"/>
    <property type="match status" value="1"/>
</dbReference>
<name>HFLD_HAEDU</name>
<protein>
    <recommendedName>
        <fullName evidence="1">High frequency lysogenization protein HflD homolog</fullName>
    </recommendedName>
</protein>
<evidence type="ECO:0000255" key="1">
    <source>
        <dbReference type="HAMAP-Rule" id="MF_00695"/>
    </source>
</evidence>
<organism>
    <name type="scientific">Haemophilus ducreyi (strain 35000HP / ATCC 700724)</name>
    <dbReference type="NCBI Taxonomy" id="233412"/>
    <lineage>
        <taxon>Bacteria</taxon>
        <taxon>Pseudomonadati</taxon>
        <taxon>Pseudomonadota</taxon>
        <taxon>Gammaproteobacteria</taxon>
        <taxon>Pasteurellales</taxon>
        <taxon>Pasteurellaceae</taxon>
        <taxon>Haemophilus</taxon>
    </lineage>
</organism>
<comment type="subcellular location">
    <subcellularLocation>
        <location>Cytoplasm</location>
    </subcellularLocation>
    <subcellularLocation>
        <location evidence="1">Cell inner membrane</location>
        <topology evidence="1">Peripheral membrane protein</topology>
        <orientation evidence="1">Cytoplasmic side</orientation>
    </subcellularLocation>
</comment>
<comment type="similarity">
    <text evidence="1">Belongs to the HflD family.</text>
</comment>